<keyword id="KW-0963">Cytoplasm</keyword>
<keyword id="KW-0479">Metal-binding</keyword>
<keyword id="KW-0489">Methyltransferase</keyword>
<keyword id="KW-1185">Reference proteome</keyword>
<keyword id="KW-0808">Transferase</keyword>
<keyword id="KW-0862">Zinc</keyword>
<accession>Q5M8Z0</accession>
<accession>Q5FWR7</accession>
<protein>
    <recommendedName>
        <fullName>Betaine--homocysteine S-methyltransferase 1</fullName>
        <ecNumber>2.1.1.5</ecNumber>
    </recommendedName>
</protein>
<gene>
    <name type="primary">bhmt</name>
</gene>
<reference key="1">
    <citation type="submission" date="2004-12" db="EMBL/GenBank/DDBJ databases">
        <authorList>
            <consortium name="NIH - Xenopus Gene Collection (XGC) project"/>
        </authorList>
    </citation>
    <scope>NUCLEOTIDE SEQUENCE [LARGE SCALE MRNA]</scope>
</reference>
<comment type="function">
    <text evidence="1">Involved in the regulation of homocysteine metabolism. Converts betaine and homocysteine to dimethylglycine and methionine, respectively. This reaction is also required for the irreversible oxidation of choline (By similarity).</text>
</comment>
<comment type="catalytic activity">
    <reaction>
        <text>L-homocysteine + glycine betaine = N,N-dimethylglycine + L-methionine</text>
        <dbReference type="Rhea" id="RHEA:22336"/>
        <dbReference type="ChEBI" id="CHEBI:17750"/>
        <dbReference type="ChEBI" id="CHEBI:57844"/>
        <dbReference type="ChEBI" id="CHEBI:58199"/>
        <dbReference type="ChEBI" id="CHEBI:58251"/>
        <dbReference type="EC" id="2.1.1.5"/>
    </reaction>
</comment>
<comment type="cofactor">
    <cofactor evidence="1">
        <name>Zn(2+)</name>
        <dbReference type="ChEBI" id="CHEBI:29105"/>
    </cofactor>
    <text evidence="1">Binds 1 zinc ion per subunit.</text>
</comment>
<comment type="pathway">
    <text>Amine and polyamine degradation; betaine degradation; sarcosine from betaine: step 1/2.</text>
</comment>
<comment type="pathway">
    <text>Amino-acid biosynthesis; L-methionine biosynthesis via de novo pathway; L-methionine from L-homocysteine (BhmT route): step 1/1.</text>
</comment>
<comment type="subunit">
    <text evidence="1">Homotetramer.</text>
</comment>
<comment type="subcellular location">
    <subcellularLocation>
        <location evidence="1">Cytoplasm</location>
    </subcellularLocation>
</comment>
<name>BHMT1_XENTR</name>
<proteinExistence type="evidence at transcript level"/>
<dbReference type="EC" id="2.1.1.5"/>
<dbReference type="EMBL" id="BC087774">
    <property type="protein sequence ID" value="AAH87774.1"/>
    <property type="molecule type" value="mRNA"/>
</dbReference>
<dbReference type="EMBL" id="BC089235">
    <property type="protein sequence ID" value="AAH89235.1"/>
    <property type="molecule type" value="mRNA"/>
</dbReference>
<dbReference type="RefSeq" id="NP_001011217.1">
    <property type="nucleotide sequence ID" value="NM_001011217.1"/>
</dbReference>
<dbReference type="SMR" id="Q5M8Z0"/>
<dbReference type="FunCoup" id="Q5M8Z0">
    <property type="interactions" value="256"/>
</dbReference>
<dbReference type="STRING" id="8364.ENSXETP00000010562"/>
<dbReference type="PaxDb" id="8364-ENSXETP00000059123"/>
<dbReference type="DNASU" id="496651"/>
<dbReference type="GeneID" id="496651"/>
<dbReference type="KEGG" id="xtr:496651"/>
<dbReference type="AGR" id="Xenbase:XB-GENE-1008382"/>
<dbReference type="CTD" id="635"/>
<dbReference type="Xenbase" id="XB-GENE-1008382">
    <property type="gene designation" value="bhmt"/>
</dbReference>
<dbReference type="eggNOG" id="KOG1579">
    <property type="taxonomic scope" value="Eukaryota"/>
</dbReference>
<dbReference type="HOGENOM" id="CLU_047457_0_0_1"/>
<dbReference type="InParanoid" id="Q5M8Z0"/>
<dbReference type="OMA" id="CKDKTEV"/>
<dbReference type="OrthoDB" id="261426at2759"/>
<dbReference type="PhylomeDB" id="Q5M8Z0"/>
<dbReference type="Reactome" id="R-XTR-1614635">
    <property type="pathway name" value="Sulfur amino acid metabolism"/>
</dbReference>
<dbReference type="Reactome" id="R-XTR-6798163">
    <property type="pathway name" value="Choline catabolism"/>
</dbReference>
<dbReference type="UniPathway" id="UPA00051">
    <property type="reaction ID" value="UER00083"/>
</dbReference>
<dbReference type="UniPathway" id="UPA00291">
    <property type="reaction ID" value="UER00432"/>
</dbReference>
<dbReference type="Proteomes" id="UP000008143">
    <property type="component" value="Chromosome 1"/>
</dbReference>
<dbReference type="Bgee" id="ENSXETG00000000523">
    <property type="expression patterns" value="Expressed in mesonephros and 18 other cell types or tissues"/>
</dbReference>
<dbReference type="ExpressionAtlas" id="Q5M8Z0">
    <property type="expression patterns" value="baseline"/>
</dbReference>
<dbReference type="GO" id="GO:0005737">
    <property type="term" value="C:cytoplasm"/>
    <property type="evidence" value="ECO:0007669"/>
    <property type="project" value="UniProtKB-SubCell"/>
</dbReference>
<dbReference type="GO" id="GO:0047150">
    <property type="term" value="F:betaine-homocysteine S-methyltransferase activity"/>
    <property type="evidence" value="ECO:0007669"/>
    <property type="project" value="UniProtKB-EC"/>
</dbReference>
<dbReference type="GO" id="GO:0008270">
    <property type="term" value="F:zinc ion binding"/>
    <property type="evidence" value="ECO:0007669"/>
    <property type="project" value="InterPro"/>
</dbReference>
<dbReference type="GO" id="GO:0006579">
    <property type="term" value="P:amino-acid betaine catabolic process"/>
    <property type="evidence" value="ECO:0007669"/>
    <property type="project" value="UniProtKB-UniPathway"/>
</dbReference>
<dbReference type="GO" id="GO:0009086">
    <property type="term" value="P:methionine biosynthetic process"/>
    <property type="evidence" value="ECO:0007669"/>
    <property type="project" value="InterPro"/>
</dbReference>
<dbReference type="GO" id="GO:0032259">
    <property type="term" value="P:methylation"/>
    <property type="evidence" value="ECO:0007669"/>
    <property type="project" value="UniProtKB-KW"/>
</dbReference>
<dbReference type="FunFam" id="3.20.20.330:FF:000003">
    <property type="entry name" value="Betaine--homocysteine S-methyltransferase 1"/>
    <property type="match status" value="1"/>
</dbReference>
<dbReference type="Gene3D" id="3.20.20.330">
    <property type="entry name" value="Homocysteine-binding-like domain"/>
    <property type="match status" value="1"/>
</dbReference>
<dbReference type="InterPro" id="IPR017226">
    <property type="entry name" value="Betaine-hCys_S-MeTrfase_BHMT"/>
</dbReference>
<dbReference type="InterPro" id="IPR051524">
    <property type="entry name" value="BHMT"/>
</dbReference>
<dbReference type="InterPro" id="IPR003726">
    <property type="entry name" value="HCY_dom"/>
</dbReference>
<dbReference type="InterPro" id="IPR036589">
    <property type="entry name" value="HCY_dom_sf"/>
</dbReference>
<dbReference type="PANTHER" id="PTHR46120">
    <property type="entry name" value="BETAINE--HOMOCYSTEINE S-METHYLTRANSFERASE 1"/>
    <property type="match status" value="1"/>
</dbReference>
<dbReference type="PANTHER" id="PTHR46120:SF1">
    <property type="entry name" value="HCY-BINDING DOMAIN-CONTAINING PROTEIN"/>
    <property type="match status" value="1"/>
</dbReference>
<dbReference type="Pfam" id="PF02574">
    <property type="entry name" value="S-methyl_trans"/>
    <property type="match status" value="1"/>
</dbReference>
<dbReference type="PIRSF" id="PIRSF037505">
    <property type="entry name" value="Betaine_HMT"/>
    <property type="match status" value="1"/>
</dbReference>
<dbReference type="SUPFAM" id="SSF82282">
    <property type="entry name" value="Homocysteine S-methyltransferase"/>
    <property type="match status" value="1"/>
</dbReference>
<dbReference type="PROSITE" id="PS50970">
    <property type="entry name" value="HCY"/>
    <property type="match status" value="1"/>
</dbReference>
<organism>
    <name type="scientific">Xenopus tropicalis</name>
    <name type="common">Western clawed frog</name>
    <name type="synonym">Silurana tropicalis</name>
    <dbReference type="NCBI Taxonomy" id="8364"/>
    <lineage>
        <taxon>Eukaryota</taxon>
        <taxon>Metazoa</taxon>
        <taxon>Chordata</taxon>
        <taxon>Craniata</taxon>
        <taxon>Vertebrata</taxon>
        <taxon>Euteleostomi</taxon>
        <taxon>Amphibia</taxon>
        <taxon>Batrachia</taxon>
        <taxon>Anura</taxon>
        <taxon>Pipoidea</taxon>
        <taxon>Pipidae</taxon>
        <taxon>Xenopodinae</taxon>
        <taxon>Xenopus</taxon>
        <taxon>Silurana</taxon>
    </lineage>
</organism>
<feature type="chain" id="PRO_0000273223" description="Betaine--homocysteine S-methyltransferase 1">
    <location>
        <begin position="1"/>
        <end position="403"/>
    </location>
</feature>
<feature type="domain" description="Hcy-binding" evidence="2">
    <location>
        <begin position="8"/>
        <end position="311"/>
    </location>
</feature>
<feature type="binding site" evidence="2">
    <location>
        <position position="214"/>
    </location>
    <ligand>
        <name>Zn(2+)</name>
        <dbReference type="ChEBI" id="CHEBI:29105"/>
    </ligand>
</feature>
<feature type="binding site" evidence="2">
    <location>
        <position position="296"/>
    </location>
    <ligand>
        <name>Zn(2+)</name>
        <dbReference type="ChEBI" id="CHEBI:29105"/>
    </ligand>
</feature>
<feature type="binding site" evidence="2">
    <location>
        <position position="297"/>
    </location>
    <ligand>
        <name>Zn(2+)</name>
        <dbReference type="ChEBI" id="CHEBI:29105"/>
    </ligand>
</feature>
<sequence length="403" mass="44154">MAPTGAKKGLLERLDAGEVVIGDGGFVFALEKRGYVKAGPWTPEAAVEHPEAVRQLHREFLRAGANVMQTFTFYASDDKLENRGNYVAKKISGQKVNEAACDIAREVANEGDALVAGGVSQTPSYLSCKSEVEVKGIFRKQLDVFIKKNVDFLIAEYFEHVEEAVWAVEVLKESGKPVAATLCIGPQGDLNGVTPGECAVRLAKAGASVVGVNCHFDPMTCIATVKLMKEGLVAAKVKAHLMTQPLAYHTPDCGKQGFIDLPEFPFALEPRIVTRWDIHKYAREAYNLGVRYIGGCCGFEPYHTRAIAEELAPERGFLPPGSEKHGSWGSGLEMHTKPWVRARARRDYWEKLPPASGRPCCPSMSKPDAWGVTKGDADLMQQKEATTEQQLIDLFAKQCIKSN</sequence>
<evidence type="ECO:0000250" key="1"/>
<evidence type="ECO:0000255" key="2">
    <source>
        <dbReference type="PROSITE-ProRule" id="PRU00333"/>
    </source>
</evidence>